<evidence type="ECO:0000255" key="1">
    <source>
        <dbReference type="HAMAP-Rule" id="MF_00102"/>
    </source>
</evidence>
<evidence type="ECO:0000305" key="2"/>
<name>DAPB_XANCB</name>
<comment type="function">
    <text evidence="1">Catalyzes the conversion of 4-hydroxy-tetrahydrodipicolinate (HTPA) to tetrahydrodipicolinate.</text>
</comment>
<comment type="catalytic activity">
    <reaction evidence="1">
        <text>(S)-2,3,4,5-tetrahydrodipicolinate + NAD(+) + H2O = (2S,4S)-4-hydroxy-2,3,4,5-tetrahydrodipicolinate + NADH + H(+)</text>
        <dbReference type="Rhea" id="RHEA:35323"/>
        <dbReference type="ChEBI" id="CHEBI:15377"/>
        <dbReference type="ChEBI" id="CHEBI:15378"/>
        <dbReference type="ChEBI" id="CHEBI:16845"/>
        <dbReference type="ChEBI" id="CHEBI:57540"/>
        <dbReference type="ChEBI" id="CHEBI:57945"/>
        <dbReference type="ChEBI" id="CHEBI:67139"/>
        <dbReference type="EC" id="1.17.1.8"/>
    </reaction>
</comment>
<comment type="catalytic activity">
    <reaction evidence="1">
        <text>(S)-2,3,4,5-tetrahydrodipicolinate + NADP(+) + H2O = (2S,4S)-4-hydroxy-2,3,4,5-tetrahydrodipicolinate + NADPH + H(+)</text>
        <dbReference type="Rhea" id="RHEA:35331"/>
        <dbReference type="ChEBI" id="CHEBI:15377"/>
        <dbReference type="ChEBI" id="CHEBI:15378"/>
        <dbReference type="ChEBI" id="CHEBI:16845"/>
        <dbReference type="ChEBI" id="CHEBI:57783"/>
        <dbReference type="ChEBI" id="CHEBI:58349"/>
        <dbReference type="ChEBI" id="CHEBI:67139"/>
        <dbReference type="EC" id="1.17.1.8"/>
    </reaction>
</comment>
<comment type="pathway">
    <text evidence="1">Amino-acid biosynthesis; L-lysine biosynthesis via DAP pathway; (S)-tetrahydrodipicolinate from L-aspartate: step 4/4.</text>
</comment>
<comment type="subcellular location">
    <subcellularLocation>
        <location evidence="1">Cytoplasm</location>
    </subcellularLocation>
</comment>
<comment type="similarity">
    <text evidence="1">Belongs to the DapB family.</text>
</comment>
<comment type="caution">
    <text evidence="2">Was originally thought to be a dihydrodipicolinate reductase (DHDPR), catalyzing the conversion of dihydrodipicolinate to tetrahydrodipicolinate. However, it was shown in E.coli that the substrate of the enzymatic reaction is not dihydrodipicolinate (DHDP) but in fact (2S,4S)-4-hydroxy-2,3,4,5-tetrahydrodipicolinic acid (HTPA), the product released by the DapA-catalyzed reaction.</text>
</comment>
<protein>
    <recommendedName>
        <fullName evidence="1">4-hydroxy-tetrahydrodipicolinate reductase</fullName>
        <shortName evidence="1">HTPA reductase</shortName>
        <ecNumber evidence="1">1.17.1.8</ecNumber>
    </recommendedName>
</protein>
<reference key="1">
    <citation type="journal article" date="2008" name="J. Biotechnol.">
        <title>The genome of Xanthomonas campestris pv. campestris B100 and its use for the reconstruction of metabolic pathways involved in xanthan biosynthesis.</title>
        <authorList>
            <person name="Vorhoelter F.-J."/>
            <person name="Schneiker S."/>
            <person name="Goesmann A."/>
            <person name="Krause L."/>
            <person name="Bekel T."/>
            <person name="Kaiser O."/>
            <person name="Linke B."/>
            <person name="Patschkowski T."/>
            <person name="Rueckert C."/>
            <person name="Schmid J."/>
            <person name="Sidhu V.K."/>
            <person name="Sieber V."/>
            <person name="Tauch A."/>
            <person name="Watt S.A."/>
            <person name="Weisshaar B."/>
            <person name="Becker A."/>
            <person name="Niehaus K."/>
            <person name="Puehler A."/>
        </authorList>
    </citation>
    <scope>NUCLEOTIDE SEQUENCE [LARGE SCALE GENOMIC DNA]</scope>
    <source>
        <strain>B100</strain>
    </source>
</reference>
<feature type="chain" id="PRO_1000094019" description="4-hydroxy-tetrahydrodipicolinate reductase">
    <location>
        <begin position="1"/>
        <end position="238"/>
    </location>
</feature>
<feature type="active site" description="Proton donor/acceptor" evidence="1">
    <location>
        <position position="149"/>
    </location>
</feature>
<feature type="active site" description="Proton donor" evidence="1">
    <location>
        <position position="153"/>
    </location>
</feature>
<feature type="binding site" evidence="1">
    <location>
        <begin position="12"/>
        <end position="17"/>
    </location>
    <ligand>
        <name>NAD(+)</name>
        <dbReference type="ChEBI" id="CHEBI:57540"/>
    </ligand>
</feature>
<feature type="binding site" evidence="1">
    <location>
        <position position="40"/>
    </location>
    <ligand>
        <name>NADP(+)</name>
        <dbReference type="ChEBI" id="CHEBI:58349"/>
    </ligand>
</feature>
<feature type="binding site" evidence="1">
    <location>
        <begin position="93"/>
        <end position="95"/>
    </location>
    <ligand>
        <name>NAD(+)</name>
        <dbReference type="ChEBI" id="CHEBI:57540"/>
    </ligand>
</feature>
<feature type="binding site" evidence="1">
    <location>
        <begin position="117"/>
        <end position="120"/>
    </location>
    <ligand>
        <name>NAD(+)</name>
        <dbReference type="ChEBI" id="CHEBI:57540"/>
    </ligand>
</feature>
<feature type="binding site" evidence="1">
    <location>
        <position position="150"/>
    </location>
    <ligand>
        <name>(S)-2,3,4,5-tetrahydrodipicolinate</name>
        <dbReference type="ChEBI" id="CHEBI:16845"/>
    </ligand>
</feature>
<feature type="binding site" evidence="1">
    <location>
        <begin position="159"/>
        <end position="160"/>
    </location>
    <ligand>
        <name>(S)-2,3,4,5-tetrahydrodipicolinate</name>
        <dbReference type="ChEBI" id="CHEBI:16845"/>
    </ligand>
</feature>
<keyword id="KW-0028">Amino-acid biosynthesis</keyword>
<keyword id="KW-0963">Cytoplasm</keyword>
<keyword id="KW-0220">Diaminopimelate biosynthesis</keyword>
<keyword id="KW-0457">Lysine biosynthesis</keyword>
<keyword id="KW-0520">NAD</keyword>
<keyword id="KW-0521">NADP</keyword>
<keyword id="KW-0560">Oxidoreductase</keyword>
<accession>B0RSP5</accession>
<dbReference type="EC" id="1.17.1.8" evidence="1"/>
<dbReference type="EMBL" id="AM920689">
    <property type="protein sequence ID" value="CAP51481.1"/>
    <property type="molecule type" value="Genomic_DNA"/>
</dbReference>
<dbReference type="SMR" id="B0RSP5"/>
<dbReference type="KEGG" id="xca:xcc-b100_2128"/>
<dbReference type="HOGENOM" id="CLU_047479_2_2_6"/>
<dbReference type="UniPathway" id="UPA00034">
    <property type="reaction ID" value="UER00018"/>
</dbReference>
<dbReference type="Proteomes" id="UP000001188">
    <property type="component" value="Chromosome"/>
</dbReference>
<dbReference type="GO" id="GO:0005829">
    <property type="term" value="C:cytosol"/>
    <property type="evidence" value="ECO:0007669"/>
    <property type="project" value="TreeGrafter"/>
</dbReference>
<dbReference type="GO" id="GO:0008839">
    <property type="term" value="F:4-hydroxy-tetrahydrodipicolinate reductase"/>
    <property type="evidence" value="ECO:0007669"/>
    <property type="project" value="UniProtKB-EC"/>
</dbReference>
<dbReference type="GO" id="GO:0051287">
    <property type="term" value="F:NAD binding"/>
    <property type="evidence" value="ECO:0007669"/>
    <property type="project" value="UniProtKB-UniRule"/>
</dbReference>
<dbReference type="GO" id="GO:0050661">
    <property type="term" value="F:NADP binding"/>
    <property type="evidence" value="ECO:0007669"/>
    <property type="project" value="UniProtKB-UniRule"/>
</dbReference>
<dbReference type="GO" id="GO:0016726">
    <property type="term" value="F:oxidoreductase activity, acting on CH or CH2 groups, NAD or NADP as acceptor"/>
    <property type="evidence" value="ECO:0007669"/>
    <property type="project" value="UniProtKB-UniRule"/>
</dbReference>
<dbReference type="GO" id="GO:0019877">
    <property type="term" value="P:diaminopimelate biosynthetic process"/>
    <property type="evidence" value="ECO:0007669"/>
    <property type="project" value="UniProtKB-UniRule"/>
</dbReference>
<dbReference type="GO" id="GO:0009089">
    <property type="term" value="P:lysine biosynthetic process via diaminopimelate"/>
    <property type="evidence" value="ECO:0007669"/>
    <property type="project" value="UniProtKB-UniRule"/>
</dbReference>
<dbReference type="CDD" id="cd02274">
    <property type="entry name" value="DHDPR_N"/>
    <property type="match status" value="1"/>
</dbReference>
<dbReference type="Gene3D" id="3.30.360.10">
    <property type="entry name" value="Dihydrodipicolinate Reductase, domain 2"/>
    <property type="match status" value="1"/>
</dbReference>
<dbReference type="Gene3D" id="3.40.50.720">
    <property type="entry name" value="NAD(P)-binding Rossmann-like Domain"/>
    <property type="match status" value="1"/>
</dbReference>
<dbReference type="HAMAP" id="MF_00102">
    <property type="entry name" value="DapB"/>
    <property type="match status" value="1"/>
</dbReference>
<dbReference type="InterPro" id="IPR022663">
    <property type="entry name" value="DapB_C"/>
</dbReference>
<dbReference type="InterPro" id="IPR000846">
    <property type="entry name" value="DapB_N"/>
</dbReference>
<dbReference type="InterPro" id="IPR022664">
    <property type="entry name" value="DapB_N_CS"/>
</dbReference>
<dbReference type="InterPro" id="IPR023940">
    <property type="entry name" value="DHDPR_bac"/>
</dbReference>
<dbReference type="InterPro" id="IPR036291">
    <property type="entry name" value="NAD(P)-bd_dom_sf"/>
</dbReference>
<dbReference type="NCBIfam" id="TIGR00036">
    <property type="entry name" value="dapB"/>
    <property type="match status" value="1"/>
</dbReference>
<dbReference type="PANTHER" id="PTHR20836:SF0">
    <property type="entry name" value="4-HYDROXY-TETRAHYDRODIPICOLINATE REDUCTASE 1, CHLOROPLASTIC-RELATED"/>
    <property type="match status" value="1"/>
</dbReference>
<dbReference type="PANTHER" id="PTHR20836">
    <property type="entry name" value="DIHYDRODIPICOLINATE REDUCTASE"/>
    <property type="match status" value="1"/>
</dbReference>
<dbReference type="Pfam" id="PF05173">
    <property type="entry name" value="DapB_C"/>
    <property type="match status" value="1"/>
</dbReference>
<dbReference type="Pfam" id="PF01113">
    <property type="entry name" value="DapB_N"/>
    <property type="match status" value="1"/>
</dbReference>
<dbReference type="PIRSF" id="PIRSF000161">
    <property type="entry name" value="DHPR"/>
    <property type="match status" value="1"/>
</dbReference>
<dbReference type="SUPFAM" id="SSF55347">
    <property type="entry name" value="Glyceraldehyde-3-phosphate dehydrogenase-like, C-terminal domain"/>
    <property type="match status" value="1"/>
</dbReference>
<dbReference type="SUPFAM" id="SSF51735">
    <property type="entry name" value="NAD(P)-binding Rossmann-fold domains"/>
    <property type="match status" value="1"/>
</dbReference>
<dbReference type="PROSITE" id="PS01298">
    <property type="entry name" value="DAPB"/>
    <property type="match status" value="1"/>
</dbReference>
<sequence length="238" mass="24756">MTTSPVKVLIHGASGRMGKALLRLAAEDDALHVVGAVVGRSPSQRVVDGVPYFAANELGGAPAFDVAIDFSLPQGFAPILALCVQRGKPLVSGTTGLDEAQRAGLLQAAGQIPLVWASNFSLGVAVLTELVERAAGSLPGWDCDIIEAHHVHKQDAPSGTALTLGEAATGSGAQPRFASVRAGDIVGEHSVQFTGLGERVELIHRATNRDIFARGALHAAKRLLGKPPGSYRVRDLVL</sequence>
<proteinExistence type="inferred from homology"/>
<gene>
    <name evidence="1" type="primary">dapB</name>
    <name type="ordered locus">xcc-b100_2128</name>
</gene>
<organism>
    <name type="scientific">Xanthomonas campestris pv. campestris (strain B100)</name>
    <dbReference type="NCBI Taxonomy" id="509169"/>
    <lineage>
        <taxon>Bacteria</taxon>
        <taxon>Pseudomonadati</taxon>
        <taxon>Pseudomonadota</taxon>
        <taxon>Gammaproteobacteria</taxon>
        <taxon>Lysobacterales</taxon>
        <taxon>Lysobacteraceae</taxon>
        <taxon>Xanthomonas</taxon>
    </lineage>
</organism>